<feature type="chain" id="PRO_0000247419" description="Putative KilA-N domain-containing protein R879">
    <location>
        <begin position="1"/>
        <end position="299"/>
    </location>
</feature>
<feature type="domain" description="KilA-N" evidence="2">
    <location>
        <begin position="1"/>
        <end position="75"/>
    </location>
</feature>
<feature type="coiled-coil region" evidence="1">
    <location>
        <begin position="76"/>
        <end position="150"/>
    </location>
</feature>
<evidence type="ECO:0000255" key="1"/>
<evidence type="ECO:0000255" key="2">
    <source>
        <dbReference type="PROSITE-ProRule" id="PRU00631"/>
    </source>
</evidence>
<reference key="1">
    <citation type="journal article" date="2004" name="Science">
        <title>The 1.2-megabase genome sequence of Mimivirus.</title>
        <authorList>
            <person name="Raoult D."/>
            <person name="Audic S."/>
            <person name="Robert C."/>
            <person name="Abergel C."/>
            <person name="Renesto P."/>
            <person name="Ogata H."/>
            <person name="La Scola B."/>
            <person name="Susan M."/>
            <person name="Claverie J.-M."/>
        </authorList>
    </citation>
    <scope>NUCLEOTIDE SEQUENCE [LARGE SCALE GENOMIC DNA]</scope>
    <source>
        <strain>Rowbotham-Bradford</strain>
    </source>
</reference>
<proteinExistence type="predicted"/>
<dbReference type="EMBL" id="AY653733">
    <property type="protein sequence ID" value="AAQ09577.2"/>
    <property type="molecule type" value="Genomic_DNA"/>
</dbReference>
<dbReference type="SMR" id="Q7T6Y3"/>
<dbReference type="KEGG" id="vg:9925548"/>
<dbReference type="OrthoDB" id="16963at10239"/>
<dbReference type="Proteomes" id="UP000001134">
    <property type="component" value="Genome"/>
</dbReference>
<dbReference type="InterPro" id="IPR022549">
    <property type="entry name" value="DUF3627"/>
</dbReference>
<dbReference type="InterPro" id="IPR018004">
    <property type="entry name" value="KilA/APSES_HTH"/>
</dbReference>
<dbReference type="InterPro" id="IPR017880">
    <property type="entry name" value="KilA_N"/>
</dbReference>
<dbReference type="Pfam" id="PF12299">
    <property type="entry name" value="DUF3627"/>
    <property type="match status" value="1"/>
</dbReference>
<dbReference type="Pfam" id="PF04383">
    <property type="entry name" value="KilA-N"/>
    <property type="match status" value="1"/>
</dbReference>
<dbReference type="PROSITE" id="PS51301">
    <property type="entry name" value="KILA_N"/>
    <property type="match status" value="1"/>
</dbReference>
<name>YR879_MIMIV</name>
<protein>
    <recommendedName>
        <fullName>Putative KilA-N domain-containing protein R879</fullName>
    </recommendedName>
</protein>
<accession>Q7T6Y3</accession>
<gene>
    <name type="ordered locus">MIMI_R879</name>
</gene>
<keyword id="KW-0175">Coiled coil</keyword>
<keyword id="KW-1185">Reference proteome</keyword>
<organism>
    <name type="scientific">Acanthamoeba polyphaga mimivirus</name>
    <name type="common">APMV</name>
    <dbReference type="NCBI Taxonomy" id="212035"/>
    <lineage>
        <taxon>Viruses</taxon>
        <taxon>Varidnaviria</taxon>
        <taxon>Bamfordvirae</taxon>
        <taxon>Nucleocytoviricota</taxon>
        <taxon>Megaviricetes</taxon>
        <taxon>Imitervirales</taxon>
        <taxon>Mimiviridae</taxon>
        <taxon>Megamimivirinae</taxon>
        <taxon>Mimivirus</taxon>
        <taxon>Mimivirus bradfordmassiliense</taxon>
    </lineage>
</organism>
<sequence>MKSDNGILMSNINKPNKCYYYCIISEQWDELIYNITGGKITELRGTYVHPKLIIHIASWCNPEYAIKVSEIVLSYHAKEAIKEKEKLLQKKNDKIDELSLKIDKQNKQINKQTATMKKQTKIMKNQTNMMKDQKSTIKEQDKKINELLSKSNEVLGYAKDTNRKITHVVKERVPYSDEPKIEHQFIIMKNNDEPIKPKKGESPKKIYDYTALRIMNKSKSSTMNRYFKDHPDGETILTIDYTPNAMHLWNQCKKELIEDDKIKSSGTSSSSFNLKKGYSENKLKKDIKRIHNLRLKHPE</sequence>
<organismHost>
    <name type="scientific">Acanthamoeba polyphaga</name>
    <name type="common">Amoeba</name>
    <dbReference type="NCBI Taxonomy" id="5757"/>
</organismHost>